<evidence type="ECO:0000255" key="1">
    <source>
        <dbReference type="HAMAP-Rule" id="MF_00417"/>
    </source>
</evidence>
<organism>
    <name type="scientific">Saccharolobus islandicus (strain L.S.2.15 / Lassen #1)</name>
    <name type="common">Sulfolobus islandicus</name>
    <dbReference type="NCBI Taxonomy" id="429572"/>
    <lineage>
        <taxon>Archaea</taxon>
        <taxon>Thermoproteota</taxon>
        <taxon>Thermoprotei</taxon>
        <taxon>Sulfolobales</taxon>
        <taxon>Sulfolobaceae</taxon>
        <taxon>Saccharolobus</taxon>
    </lineage>
</organism>
<reference key="1">
    <citation type="journal article" date="2009" name="Proc. Natl. Acad. Sci. U.S.A.">
        <title>Biogeography of the Sulfolobus islandicus pan-genome.</title>
        <authorList>
            <person name="Reno M.L."/>
            <person name="Held N.L."/>
            <person name="Fields C.J."/>
            <person name="Burke P.V."/>
            <person name="Whitaker R.J."/>
        </authorList>
    </citation>
    <scope>NUCLEOTIDE SEQUENCE [LARGE SCALE GENOMIC DNA]</scope>
    <source>
        <strain>L.S.2.15 / Lassen #1</strain>
    </source>
</reference>
<proteinExistence type="inferred from homology"/>
<comment type="function">
    <text evidence="1">Removes 5-oxoproline from various penultimate amino acid residues except L-proline.</text>
</comment>
<comment type="catalytic activity">
    <reaction evidence="1">
        <text>Release of an N-terminal pyroglutamyl group from a polypeptide, the second amino acid generally not being Pro.</text>
        <dbReference type="EC" id="3.4.19.3"/>
    </reaction>
</comment>
<comment type="subunit">
    <text evidence="1">Homotetramer.</text>
</comment>
<comment type="subcellular location">
    <subcellularLocation>
        <location evidence="1">Cytoplasm</location>
    </subcellularLocation>
</comment>
<comment type="similarity">
    <text evidence="1">Belongs to the peptidase C15 family.</text>
</comment>
<keyword id="KW-0963">Cytoplasm</keyword>
<keyword id="KW-0378">Hydrolase</keyword>
<keyword id="KW-0645">Protease</keyword>
<keyword id="KW-0788">Thiol protease</keyword>
<gene>
    <name evidence="1" type="primary">pcp</name>
    <name type="ordered locus">LS215_1148</name>
</gene>
<accession>C3MP49</accession>
<name>PCP_SACI2</name>
<dbReference type="EC" id="3.4.19.3" evidence="1"/>
<dbReference type="EMBL" id="CP001399">
    <property type="protein sequence ID" value="ACP35162.1"/>
    <property type="molecule type" value="Genomic_DNA"/>
</dbReference>
<dbReference type="RefSeq" id="WP_010923507.1">
    <property type="nucleotide sequence ID" value="NC_012589.1"/>
</dbReference>
<dbReference type="SMR" id="C3MP49"/>
<dbReference type="MEROPS" id="C15.001"/>
<dbReference type="KEGG" id="sis:LS215_1148"/>
<dbReference type="HOGENOM" id="CLU_043960_4_3_2"/>
<dbReference type="OrthoDB" id="39672at2157"/>
<dbReference type="Proteomes" id="UP000001747">
    <property type="component" value="Chromosome"/>
</dbReference>
<dbReference type="GO" id="GO:0005829">
    <property type="term" value="C:cytosol"/>
    <property type="evidence" value="ECO:0007669"/>
    <property type="project" value="InterPro"/>
</dbReference>
<dbReference type="GO" id="GO:0016920">
    <property type="term" value="F:pyroglutamyl-peptidase activity"/>
    <property type="evidence" value="ECO:0007669"/>
    <property type="project" value="UniProtKB-UniRule"/>
</dbReference>
<dbReference type="GO" id="GO:0006508">
    <property type="term" value="P:proteolysis"/>
    <property type="evidence" value="ECO:0007669"/>
    <property type="project" value="UniProtKB-KW"/>
</dbReference>
<dbReference type="CDD" id="cd00501">
    <property type="entry name" value="Peptidase_C15"/>
    <property type="match status" value="1"/>
</dbReference>
<dbReference type="FunFam" id="3.40.630.20:FF:000005">
    <property type="entry name" value="Pyrrolidone-carboxylate peptidase"/>
    <property type="match status" value="1"/>
</dbReference>
<dbReference type="Gene3D" id="3.40.630.20">
    <property type="entry name" value="Peptidase C15, pyroglutamyl peptidase I-like"/>
    <property type="match status" value="1"/>
</dbReference>
<dbReference type="HAMAP" id="MF_00417">
    <property type="entry name" value="Pyrrolid_peptidase"/>
    <property type="match status" value="1"/>
</dbReference>
<dbReference type="InterPro" id="IPR000816">
    <property type="entry name" value="Peptidase_C15"/>
</dbReference>
<dbReference type="InterPro" id="IPR016125">
    <property type="entry name" value="Peptidase_C15-like"/>
</dbReference>
<dbReference type="InterPro" id="IPR036440">
    <property type="entry name" value="Peptidase_C15-like_sf"/>
</dbReference>
<dbReference type="InterPro" id="IPR029762">
    <property type="entry name" value="PGP-I_bact-type"/>
</dbReference>
<dbReference type="InterPro" id="IPR033694">
    <property type="entry name" value="PGPEP1_Cys_AS"/>
</dbReference>
<dbReference type="InterPro" id="IPR033693">
    <property type="entry name" value="PGPEP1_Glu_AS"/>
</dbReference>
<dbReference type="NCBIfam" id="NF009672">
    <property type="entry name" value="PRK13193.1"/>
    <property type="match status" value="1"/>
</dbReference>
<dbReference type="PANTHER" id="PTHR23402">
    <property type="entry name" value="PROTEASE FAMILY C15 PYROGLUTAMYL-PEPTIDASE I-RELATED"/>
    <property type="match status" value="1"/>
</dbReference>
<dbReference type="PANTHER" id="PTHR23402:SF1">
    <property type="entry name" value="PYROGLUTAMYL-PEPTIDASE I"/>
    <property type="match status" value="1"/>
</dbReference>
<dbReference type="Pfam" id="PF01470">
    <property type="entry name" value="Peptidase_C15"/>
    <property type="match status" value="1"/>
</dbReference>
<dbReference type="PIRSF" id="PIRSF015592">
    <property type="entry name" value="Prld-crbxl_pptds"/>
    <property type="match status" value="1"/>
</dbReference>
<dbReference type="PRINTS" id="PR00706">
    <property type="entry name" value="PYROGLUPTASE"/>
</dbReference>
<dbReference type="SUPFAM" id="SSF53182">
    <property type="entry name" value="Pyrrolidone carboxyl peptidase (pyroglutamate aminopeptidase)"/>
    <property type="match status" value="1"/>
</dbReference>
<dbReference type="PROSITE" id="PS01334">
    <property type="entry name" value="PYRASE_CYS"/>
    <property type="match status" value="1"/>
</dbReference>
<dbReference type="PROSITE" id="PS01333">
    <property type="entry name" value="PYRASE_GLU"/>
    <property type="match status" value="1"/>
</dbReference>
<protein>
    <recommendedName>
        <fullName evidence="1">Pyrrolidone-carboxylate peptidase</fullName>
        <ecNumber evidence="1">3.4.19.3</ecNumber>
    </recommendedName>
    <alternativeName>
        <fullName evidence="1">5-oxoprolyl-peptidase</fullName>
    </alternativeName>
    <alternativeName>
        <fullName evidence="1">Pyroglutamyl-peptidase I</fullName>
        <shortName evidence="1">PGP-I</shortName>
        <shortName evidence="1">Pyrase</shortName>
    </alternativeName>
</protein>
<sequence>MTVLLFGFEPFLEYKENPSQLIVEALNGSTILKEEVKGVILPVEYEKIEDLIVTKIREMKPILTLGIGVAPGRAKITPEKIAINYKYSREGDNAGKKYKGEKIDPLGQDGIFTNIPVEDLVDLLNENGIPAELSLSAGSYLCNNAMYIIIREARKYNSLGGFIHVPLHESYAARIQRPIPSMSLDTMIRGIRLSMEFILTNKKENLTFS</sequence>
<feature type="chain" id="PRO_1000206026" description="Pyrrolidone-carboxylate peptidase">
    <location>
        <begin position="1"/>
        <end position="209"/>
    </location>
</feature>
<feature type="active site" evidence="1">
    <location>
        <position position="79"/>
    </location>
</feature>
<feature type="active site" evidence="1">
    <location>
        <position position="142"/>
    </location>
</feature>
<feature type="active site" evidence="1">
    <location>
        <position position="164"/>
    </location>
</feature>